<dbReference type="EC" id="6.1.1.6" evidence="1"/>
<dbReference type="EMBL" id="BA000028">
    <property type="protein sequence ID" value="BAC12044.1"/>
    <property type="molecule type" value="Genomic_DNA"/>
</dbReference>
<dbReference type="RefSeq" id="WP_011064491.1">
    <property type="nucleotide sequence ID" value="NC_004193.1"/>
</dbReference>
<dbReference type="SMR" id="Q8EU10"/>
<dbReference type="STRING" id="221109.gene:10732251"/>
<dbReference type="KEGG" id="oih:OB0088"/>
<dbReference type="eggNOG" id="COG1190">
    <property type="taxonomic scope" value="Bacteria"/>
</dbReference>
<dbReference type="HOGENOM" id="CLU_008255_6_0_9"/>
<dbReference type="OrthoDB" id="9802326at2"/>
<dbReference type="PhylomeDB" id="Q8EU10"/>
<dbReference type="Proteomes" id="UP000000822">
    <property type="component" value="Chromosome"/>
</dbReference>
<dbReference type="GO" id="GO:0005829">
    <property type="term" value="C:cytosol"/>
    <property type="evidence" value="ECO:0007669"/>
    <property type="project" value="TreeGrafter"/>
</dbReference>
<dbReference type="GO" id="GO:0005524">
    <property type="term" value="F:ATP binding"/>
    <property type="evidence" value="ECO:0007669"/>
    <property type="project" value="UniProtKB-UniRule"/>
</dbReference>
<dbReference type="GO" id="GO:0140096">
    <property type="term" value="F:catalytic activity, acting on a protein"/>
    <property type="evidence" value="ECO:0007669"/>
    <property type="project" value="UniProtKB-ARBA"/>
</dbReference>
<dbReference type="GO" id="GO:0004824">
    <property type="term" value="F:lysine-tRNA ligase activity"/>
    <property type="evidence" value="ECO:0007669"/>
    <property type="project" value="UniProtKB-UniRule"/>
</dbReference>
<dbReference type="GO" id="GO:0000287">
    <property type="term" value="F:magnesium ion binding"/>
    <property type="evidence" value="ECO:0007669"/>
    <property type="project" value="UniProtKB-UniRule"/>
</dbReference>
<dbReference type="GO" id="GO:0016740">
    <property type="term" value="F:transferase activity"/>
    <property type="evidence" value="ECO:0007669"/>
    <property type="project" value="UniProtKB-ARBA"/>
</dbReference>
<dbReference type="GO" id="GO:0000049">
    <property type="term" value="F:tRNA binding"/>
    <property type="evidence" value="ECO:0007669"/>
    <property type="project" value="TreeGrafter"/>
</dbReference>
<dbReference type="GO" id="GO:0006430">
    <property type="term" value="P:lysyl-tRNA aminoacylation"/>
    <property type="evidence" value="ECO:0007669"/>
    <property type="project" value="UniProtKB-UniRule"/>
</dbReference>
<dbReference type="CDD" id="cd00775">
    <property type="entry name" value="LysRS_core"/>
    <property type="match status" value="1"/>
</dbReference>
<dbReference type="CDD" id="cd04322">
    <property type="entry name" value="LysRS_N"/>
    <property type="match status" value="1"/>
</dbReference>
<dbReference type="FunFam" id="2.40.50.140:FF:000024">
    <property type="entry name" value="Lysine--tRNA ligase"/>
    <property type="match status" value="1"/>
</dbReference>
<dbReference type="FunFam" id="3.30.930.10:FF:000001">
    <property type="entry name" value="Lysine--tRNA ligase"/>
    <property type="match status" value="1"/>
</dbReference>
<dbReference type="Gene3D" id="3.30.930.10">
    <property type="entry name" value="Bira Bifunctional Protein, Domain 2"/>
    <property type="match status" value="1"/>
</dbReference>
<dbReference type="Gene3D" id="2.40.50.140">
    <property type="entry name" value="Nucleic acid-binding proteins"/>
    <property type="match status" value="1"/>
</dbReference>
<dbReference type="HAMAP" id="MF_00252">
    <property type="entry name" value="Lys_tRNA_synth_class2"/>
    <property type="match status" value="1"/>
</dbReference>
<dbReference type="InterPro" id="IPR004364">
    <property type="entry name" value="Aa-tRNA-synt_II"/>
</dbReference>
<dbReference type="InterPro" id="IPR006195">
    <property type="entry name" value="aa-tRNA-synth_II"/>
</dbReference>
<dbReference type="InterPro" id="IPR045864">
    <property type="entry name" value="aa-tRNA-synth_II/BPL/LPL"/>
</dbReference>
<dbReference type="InterPro" id="IPR002313">
    <property type="entry name" value="Lys-tRNA-ligase_II"/>
</dbReference>
<dbReference type="InterPro" id="IPR034762">
    <property type="entry name" value="Lys-tRNA-ligase_II_bac/euk"/>
</dbReference>
<dbReference type="InterPro" id="IPR044136">
    <property type="entry name" value="Lys-tRNA-ligase_II_N"/>
</dbReference>
<dbReference type="InterPro" id="IPR018149">
    <property type="entry name" value="Lys-tRNA-synth_II_C"/>
</dbReference>
<dbReference type="InterPro" id="IPR012340">
    <property type="entry name" value="NA-bd_OB-fold"/>
</dbReference>
<dbReference type="InterPro" id="IPR004365">
    <property type="entry name" value="NA-bd_OB_tRNA"/>
</dbReference>
<dbReference type="NCBIfam" id="TIGR00499">
    <property type="entry name" value="lysS_bact"/>
    <property type="match status" value="1"/>
</dbReference>
<dbReference type="NCBIfam" id="NF001756">
    <property type="entry name" value="PRK00484.1"/>
    <property type="match status" value="1"/>
</dbReference>
<dbReference type="PANTHER" id="PTHR42918:SF15">
    <property type="entry name" value="LYSINE--TRNA LIGASE, CHLOROPLASTIC_MITOCHONDRIAL"/>
    <property type="match status" value="1"/>
</dbReference>
<dbReference type="PANTHER" id="PTHR42918">
    <property type="entry name" value="LYSYL-TRNA SYNTHETASE"/>
    <property type="match status" value="1"/>
</dbReference>
<dbReference type="Pfam" id="PF00152">
    <property type="entry name" value="tRNA-synt_2"/>
    <property type="match status" value="1"/>
</dbReference>
<dbReference type="Pfam" id="PF01336">
    <property type="entry name" value="tRNA_anti-codon"/>
    <property type="match status" value="1"/>
</dbReference>
<dbReference type="PIRSF" id="PIRSF039101">
    <property type="entry name" value="LysRS2"/>
    <property type="match status" value="1"/>
</dbReference>
<dbReference type="PRINTS" id="PR00982">
    <property type="entry name" value="TRNASYNTHLYS"/>
</dbReference>
<dbReference type="SUPFAM" id="SSF55681">
    <property type="entry name" value="Class II aaRS and biotin synthetases"/>
    <property type="match status" value="1"/>
</dbReference>
<dbReference type="SUPFAM" id="SSF50249">
    <property type="entry name" value="Nucleic acid-binding proteins"/>
    <property type="match status" value="1"/>
</dbReference>
<dbReference type="PROSITE" id="PS50862">
    <property type="entry name" value="AA_TRNA_LIGASE_II"/>
    <property type="match status" value="1"/>
</dbReference>
<feature type="chain" id="PRO_0000152661" description="Lysine--tRNA ligase">
    <location>
        <begin position="1"/>
        <end position="493"/>
    </location>
</feature>
<feature type="binding site" evidence="1">
    <location>
        <position position="404"/>
    </location>
    <ligand>
        <name>Mg(2+)</name>
        <dbReference type="ChEBI" id="CHEBI:18420"/>
        <label>1</label>
    </ligand>
</feature>
<feature type="binding site" evidence="1">
    <location>
        <position position="411"/>
    </location>
    <ligand>
        <name>Mg(2+)</name>
        <dbReference type="ChEBI" id="CHEBI:18420"/>
        <label>1</label>
    </ligand>
</feature>
<feature type="binding site" evidence="1">
    <location>
        <position position="411"/>
    </location>
    <ligand>
        <name>Mg(2+)</name>
        <dbReference type="ChEBI" id="CHEBI:18420"/>
        <label>2</label>
    </ligand>
</feature>
<sequence>MSEELNEHMQVRRDKLAEHMEKGLDPFGGKFERSHQATDLIEKYDSYSKEELEETTDEVTIAGRLMTKRGKGKAGFAHIQDLSGQIQLYVRKDMIGDDAYEVFKSADLGDIVGVTGVMFKTNVGEISVKAKQFQLLTKSLRPLPEKYHGLKDIEQRYRQRYLDLITNPDSRGTFVSRSKIIQSMREYLNGQGFLEVETPMMHSIPGGASARPFITHHNALDIELYMRIAIELHLKRLMVGGLEKVYEIGRVFRNEGVSTRHNPEFTMIELYEAYADYHDIMELTENLVAHIAKQVHGSTTITYGEHEINLEPKWTRLHIVDAVKDATGVDFWKEVSDEEARALAKEHGVQVTESMSYGHVVNEFFEQKVEETLIQPTFIHGHPVEISPLAKKNKEDERFTDRFELFIVGREHANAFSELNDPIDQRARFEAQVKERAEGNDEAHYMDEDFLEALEYGMPPTGGLGIGVDRLVMLLTNSPSIRDVLLFPQMRTK</sequence>
<name>SYK_OCEIH</name>
<protein>
    <recommendedName>
        <fullName evidence="1">Lysine--tRNA ligase</fullName>
        <ecNumber evidence="1">6.1.1.6</ecNumber>
    </recommendedName>
    <alternativeName>
        <fullName evidence="1">Lysyl-tRNA synthetase</fullName>
        <shortName evidence="1">LysRS</shortName>
    </alternativeName>
</protein>
<keyword id="KW-0030">Aminoacyl-tRNA synthetase</keyword>
<keyword id="KW-0067">ATP-binding</keyword>
<keyword id="KW-0963">Cytoplasm</keyword>
<keyword id="KW-0436">Ligase</keyword>
<keyword id="KW-0460">Magnesium</keyword>
<keyword id="KW-0479">Metal-binding</keyword>
<keyword id="KW-0547">Nucleotide-binding</keyword>
<keyword id="KW-0648">Protein biosynthesis</keyword>
<keyword id="KW-1185">Reference proteome</keyword>
<proteinExistence type="inferred from homology"/>
<organism>
    <name type="scientific">Oceanobacillus iheyensis (strain DSM 14371 / CIP 107618 / JCM 11309 / KCTC 3954 / HTE831)</name>
    <dbReference type="NCBI Taxonomy" id="221109"/>
    <lineage>
        <taxon>Bacteria</taxon>
        <taxon>Bacillati</taxon>
        <taxon>Bacillota</taxon>
        <taxon>Bacilli</taxon>
        <taxon>Bacillales</taxon>
        <taxon>Bacillaceae</taxon>
        <taxon>Oceanobacillus</taxon>
    </lineage>
</organism>
<accession>Q8EU10</accession>
<comment type="catalytic activity">
    <reaction evidence="1">
        <text>tRNA(Lys) + L-lysine + ATP = L-lysyl-tRNA(Lys) + AMP + diphosphate</text>
        <dbReference type="Rhea" id="RHEA:20792"/>
        <dbReference type="Rhea" id="RHEA-COMP:9696"/>
        <dbReference type="Rhea" id="RHEA-COMP:9697"/>
        <dbReference type="ChEBI" id="CHEBI:30616"/>
        <dbReference type="ChEBI" id="CHEBI:32551"/>
        <dbReference type="ChEBI" id="CHEBI:33019"/>
        <dbReference type="ChEBI" id="CHEBI:78442"/>
        <dbReference type="ChEBI" id="CHEBI:78529"/>
        <dbReference type="ChEBI" id="CHEBI:456215"/>
        <dbReference type="EC" id="6.1.1.6"/>
    </reaction>
</comment>
<comment type="cofactor">
    <cofactor evidence="1">
        <name>Mg(2+)</name>
        <dbReference type="ChEBI" id="CHEBI:18420"/>
    </cofactor>
    <text evidence="1">Binds 3 Mg(2+) ions per subunit.</text>
</comment>
<comment type="subunit">
    <text evidence="1">Homodimer.</text>
</comment>
<comment type="subcellular location">
    <subcellularLocation>
        <location evidence="1">Cytoplasm</location>
    </subcellularLocation>
</comment>
<comment type="similarity">
    <text evidence="1">Belongs to the class-II aminoacyl-tRNA synthetase family.</text>
</comment>
<reference key="1">
    <citation type="journal article" date="2002" name="Nucleic Acids Res.">
        <title>Genome sequence of Oceanobacillus iheyensis isolated from the Iheya Ridge and its unexpected adaptive capabilities to extreme environments.</title>
        <authorList>
            <person name="Takami H."/>
            <person name="Takaki Y."/>
            <person name="Uchiyama I."/>
        </authorList>
    </citation>
    <scope>NUCLEOTIDE SEQUENCE [LARGE SCALE GENOMIC DNA]</scope>
    <source>
        <strain>DSM 14371 / CIP 107618 / JCM 11309 / KCTC 3954 / HTE831</strain>
    </source>
</reference>
<gene>
    <name evidence="1" type="primary">lysS</name>
    <name type="ordered locus">OB0088</name>
</gene>
<evidence type="ECO:0000255" key="1">
    <source>
        <dbReference type="HAMAP-Rule" id="MF_00252"/>
    </source>
</evidence>